<reference key="1">
    <citation type="journal article" date="1993" name="FEMS Microbiol. Lett.">
        <title>Molecular cloning and sequencing of infC, the gene encoding translation initiation factor IF3, from four enterobacterial species.</title>
        <authorList>
            <person name="Liveris D."/>
            <person name="Schwartz J.J."/>
            <person name="Geertman R."/>
            <person name="Schwartz I."/>
        </authorList>
    </citation>
    <scope>NUCLEOTIDE SEQUENCE [GENOMIC DNA]</scope>
    <source>
        <strain>ATCC 14028 / SGSG 2980 / CDC 6516-60 / NCTC 12023</strain>
    </source>
</reference>
<reference key="2">
    <citation type="journal article" date="2001" name="Nature">
        <title>Complete genome sequence of Salmonella enterica serovar Typhimurium LT2.</title>
        <authorList>
            <person name="McClelland M."/>
            <person name="Sanderson K.E."/>
            <person name="Spieth J."/>
            <person name="Clifton S.W."/>
            <person name="Latreille P."/>
            <person name="Courtney L."/>
            <person name="Porwollik S."/>
            <person name="Ali J."/>
            <person name="Dante M."/>
            <person name="Du F."/>
            <person name="Hou S."/>
            <person name="Layman D."/>
            <person name="Leonard S."/>
            <person name="Nguyen C."/>
            <person name="Scott K."/>
            <person name="Holmes A."/>
            <person name="Grewal N."/>
            <person name="Mulvaney E."/>
            <person name="Ryan E."/>
            <person name="Sun H."/>
            <person name="Florea L."/>
            <person name="Miller W."/>
            <person name="Stoneking T."/>
            <person name="Nhan M."/>
            <person name="Waterston R."/>
            <person name="Wilson R.K."/>
        </authorList>
    </citation>
    <scope>NUCLEOTIDE SEQUENCE [LARGE SCALE GENOMIC DNA]</scope>
    <source>
        <strain>LT2 / SGSC1412 / ATCC 700720</strain>
    </source>
</reference>
<protein>
    <recommendedName>
        <fullName evidence="2">Translation initiation factor IF-3</fullName>
    </recommendedName>
</protein>
<evidence type="ECO:0000250" key="1"/>
<evidence type="ECO:0000255" key="2">
    <source>
        <dbReference type="HAMAP-Rule" id="MF_00080"/>
    </source>
</evidence>
<evidence type="ECO:0000305" key="3"/>
<dbReference type="EMBL" id="L11254">
    <property type="protein sequence ID" value="AAC36814.1"/>
    <property type="molecule type" value="Unassigned_DNA"/>
</dbReference>
<dbReference type="EMBL" id="AE006468">
    <property type="protein sequence ID" value="AAL20259.1"/>
    <property type="status" value="ALT_INIT"/>
    <property type="molecule type" value="Genomic_DNA"/>
</dbReference>
<dbReference type="RefSeq" id="NP_460300.3">
    <property type="nucleotide sequence ID" value="NC_003197.2"/>
</dbReference>
<dbReference type="RefSeq" id="WP_000058403.1">
    <property type="nucleotide sequence ID" value="NC_003197.2"/>
</dbReference>
<dbReference type="SMR" id="P33321"/>
<dbReference type="STRING" id="99287.STM1334"/>
<dbReference type="PaxDb" id="99287-STM1334"/>
<dbReference type="GeneID" id="1252852"/>
<dbReference type="KEGG" id="stm:STM1334"/>
<dbReference type="PATRIC" id="fig|99287.12.peg.1417"/>
<dbReference type="HOGENOM" id="CLU_054919_3_2_6"/>
<dbReference type="OMA" id="KCTVIFR"/>
<dbReference type="PhylomeDB" id="P33321"/>
<dbReference type="Proteomes" id="UP000001014">
    <property type="component" value="Chromosome"/>
</dbReference>
<dbReference type="GO" id="GO:0005829">
    <property type="term" value="C:cytosol"/>
    <property type="evidence" value="ECO:0000318"/>
    <property type="project" value="GO_Central"/>
</dbReference>
<dbReference type="GO" id="GO:0043022">
    <property type="term" value="F:ribosome binding"/>
    <property type="evidence" value="ECO:0000318"/>
    <property type="project" value="GO_Central"/>
</dbReference>
<dbReference type="GO" id="GO:0003743">
    <property type="term" value="F:translation initiation factor activity"/>
    <property type="evidence" value="ECO:0000318"/>
    <property type="project" value="GO_Central"/>
</dbReference>
<dbReference type="GO" id="GO:0032790">
    <property type="term" value="P:ribosome disassembly"/>
    <property type="evidence" value="ECO:0000318"/>
    <property type="project" value="GO_Central"/>
</dbReference>
<dbReference type="FunFam" id="3.10.20.80:FF:000001">
    <property type="entry name" value="Translation initiation factor IF-3"/>
    <property type="match status" value="1"/>
</dbReference>
<dbReference type="FunFam" id="3.30.110.10:FF:000001">
    <property type="entry name" value="Translation initiation factor IF-3"/>
    <property type="match status" value="1"/>
</dbReference>
<dbReference type="Gene3D" id="3.30.110.10">
    <property type="entry name" value="Translation initiation factor 3 (IF-3), C-terminal domain"/>
    <property type="match status" value="1"/>
</dbReference>
<dbReference type="Gene3D" id="3.10.20.80">
    <property type="entry name" value="Translation initiation factor 3 (IF-3), N-terminal domain"/>
    <property type="match status" value="1"/>
</dbReference>
<dbReference type="HAMAP" id="MF_00080">
    <property type="entry name" value="IF_3"/>
    <property type="match status" value="1"/>
</dbReference>
<dbReference type="InterPro" id="IPR036788">
    <property type="entry name" value="T_IF-3_C_sf"/>
</dbReference>
<dbReference type="InterPro" id="IPR036787">
    <property type="entry name" value="T_IF-3_N_sf"/>
</dbReference>
<dbReference type="InterPro" id="IPR019813">
    <property type="entry name" value="Translation_initiation_fac3_CS"/>
</dbReference>
<dbReference type="InterPro" id="IPR001288">
    <property type="entry name" value="Translation_initiation_fac_3"/>
</dbReference>
<dbReference type="InterPro" id="IPR019815">
    <property type="entry name" value="Translation_initiation_fac_3_C"/>
</dbReference>
<dbReference type="InterPro" id="IPR019814">
    <property type="entry name" value="Translation_initiation_fac_3_N"/>
</dbReference>
<dbReference type="NCBIfam" id="TIGR00168">
    <property type="entry name" value="infC"/>
    <property type="match status" value="1"/>
</dbReference>
<dbReference type="PANTHER" id="PTHR10938">
    <property type="entry name" value="TRANSLATION INITIATION FACTOR IF-3"/>
    <property type="match status" value="1"/>
</dbReference>
<dbReference type="PANTHER" id="PTHR10938:SF0">
    <property type="entry name" value="TRANSLATION INITIATION FACTOR IF-3, MITOCHONDRIAL"/>
    <property type="match status" value="1"/>
</dbReference>
<dbReference type="Pfam" id="PF00707">
    <property type="entry name" value="IF3_C"/>
    <property type="match status" value="1"/>
</dbReference>
<dbReference type="Pfam" id="PF05198">
    <property type="entry name" value="IF3_N"/>
    <property type="match status" value="1"/>
</dbReference>
<dbReference type="SUPFAM" id="SSF55200">
    <property type="entry name" value="Translation initiation factor IF3, C-terminal domain"/>
    <property type="match status" value="1"/>
</dbReference>
<dbReference type="SUPFAM" id="SSF54364">
    <property type="entry name" value="Translation initiation factor IF3, N-terminal domain"/>
    <property type="match status" value="1"/>
</dbReference>
<dbReference type="PROSITE" id="PS00938">
    <property type="entry name" value="IF3"/>
    <property type="match status" value="1"/>
</dbReference>
<accession>P33321</accession>
<feature type="chain" id="PRO_0000177571" description="Translation initiation factor IF-3">
    <location>
        <begin position="1"/>
        <end position="180"/>
    </location>
</feature>
<feature type="site" description="Important for 30S binding" evidence="1">
    <location>
        <position position="107"/>
    </location>
</feature>
<feature type="site" description="Important for 30S binding" evidence="1">
    <location>
        <position position="110"/>
    </location>
</feature>
<proteinExistence type="inferred from homology"/>
<keyword id="KW-0963">Cytoplasm</keyword>
<keyword id="KW-0396">Initiation factor</keyword>
<keyword id="KW-0648">Protein biosynthesis</keyword>
<keyword id="KW-1185">Reference proteome</keyword>
<name>IF3_SALTY</name>
<comment type="function">
    <text evidence="2">IF-3 binds to the 30S ribosomal subunit and shifts the equilibrium between 70S ribosomes and their 50S and 30S subunits in favor of the free subunits, thus enhancing the availability of 30S subunits on which protein synthesis initiation begins.</text>
</comment>
<comment type="subunit">
    <text evidence="2">Monomer.</text>
</comment>
<comment type="subcellular location">
    <subcellularLocation>
        <location evidence="2">Cytoplasm</location>
    </subcellularLocation>
</comment>
<comment type="similarity">
    <text evidence="2">Belongs to the IF-3 family.</text>
</comment>
<comment type="sequence caution" evidence="3">
    <conflict type="erroneous initiation">
        <sequence resource="EMBL-CDS" id="AAL20259"/>
    </conflict>
</comment>
<sequence length="180" mass="20594">MKGGKRVQTARPNRINSEIRAQEVRLTGLEGEQLGIVSLREALEKAEEAGVDLVEISPNAEPPVCRIMDYGKFLYEKSKSSKEQKKKQKVIQVKEIKFRPGTDEGDYQVKLRSLIRFLEEGDKAKITLRFRGREMAHQQIGMEVLNRVKDDLQELAVVESFPTKIEGRQMIMVLAPKKKQ</sequence>
<organism>
    <name type="scientific">Salmonella typhimurium (strain LT2 / SGSC1412 / ATCC 700720)</name>
    <dbReference type="NCBI Taxonomy" id="99287"/>
    <lineage>
        <taxon>Bacteria</taxon>
        <taxon>Pseudomonadati</taxon>
        <taxon>Pseudomonadota</taxon>
        <taxon>Gammaproteobacteria</taxon>
        <taxon>Enterobacterales</taxon>
        <taxon>Enterobacteriaceae</taxon>
        <taxon>Salmonella</taxon>
    </lineage>
</organism>
<gene>
    <name evidence="2" type="primary">infC</name>
    <name type="ordered locus">STM1334</name>
</gene>